<keyword id="KW-0108">Calcium channel impairing toxin</keyword>
<keyword id="KW-1015">Disulfide bond</keyword>
<keyword id="KW-0872">Ion channel impairing toxin</keyword>
<keyword id="KW-0528">Neurotoxin</keyword>
<keyword id="KW-0964">Secreted</keyword>
<keyword id="KW-0732">Signal</keyword>
<keyword id="KW-0800">Toxin</keyword>
<organism>
    <name type="scientific">Trimorphodon biscutatus</name>
    <name type="common">Western lyre snake</name>
    <dbReference type="NCBI Taxonomy" id="338818"/>
    <lineage>
        <taxon>Eukaryota</taxon>
        <taxon>Metazoa</taxon>
        <taxon>Chordata</taxon>
        <taxon>Craniata</taxon>
        <taxon>Vertebrata</taxon>
        <taxon>Euteleostomi</taxon>
        <taxon>Lepidosauria</taxon>
        <taxon>Squamata</taxon>
        <taxon>Bifurcata</taxon>
        <taxon>Unidentata</taxon>
        <taxon>Episquamata</taxon>
        <taxon>Toxicofera</taxon>
        <taxon>Serpentes</taxon>
        <taxon>Colubroidea</taxon>
        <taxon>Colubridae</taxon>
        <taxon>Colubrinae</taxon>
        <taxon>Trimorphodon</taxon>
    </lineage>
</organism>
<sequence length="236" mass="26648">MIVFILLSLAAVLEQSFGNVDFNSESPRRPEKQKEIVDRHNSFRRSVRPTASNMLKMEWYSEAASNAERWAYRCNLGHSPDSSRILDGIKCGENIYMSSNPRAWTEILQLWYDEYKNFVYGVGANPPGSVTGHFSQMVWYKSYRIGCAAAYCPSSGYSYFYVCQYCPIGNIEGSTATPYKSGPTCGDCPSACDNGLCTNPCLREDKFTNCKSLVQQNSCQHDWTRKNCPATCFCHN</sequence>
<name>CRVP_TRIBI</name>
<comment type="function">
    <text evidence="1">Blocks contraction of smooth muscle elicited by high potassium-induced depolarization, but does not block caffeine-stimulated contraction. May target voltage-gated calcium channels on smooth muscle (By similarity).</text>
</comment>
<comment type="subcellular location">
    <subcellularLocation>
        <location evidence="1">Secreted</location>
    </subcellularLocation>
</comment>
<comment type="tissue specificity">
    <text>Expressed by the venom gland.</text>
</comment>
<comment type="similarity">
    <text evidence="3">Belongs to the CRISP family.</text>
</comment>
<reference key="1">
    <citation type="journal article" date="2006" name="Nature">
        <title>Early evolution of the venom system in lizards and snakes.</title>
        <authorList>
            <person name="Fry B.G."/>
            <person name="Vidal N."/>
            <person name="Norman J.A."/>
            <person name="Vonk F.J."/>
            <person name="Scheib H."/>
            <person name="Ramjan S.F.R."/>
            <person name="Kuruppu S."/>
            <person name="Fung K."/>
            <person name="Blair Hedges S."/>
            <person name="Richardson M.K."/>
            <person name="Hodgson W.C."/>
            <person name="Ignjatovic V."/>
            <person name="Summerhayes R."/>
            <person name="Kochva E."/>
        </authorList>
    </citation>
    <scope>NUCLEOTIDE SEQUENCE [LARGE SCALE MRNA]</scope>
    <source>
        <tissue>Venom gland</tissue>
    </source>
</reference>
<proteinExistence type="evidence at transcript level"/>
<feature type="signal peptide" evidence="1">
    <location>
        <begin position="1"/>
        <end position="18"/>
    </location>
</feature>
<feature type="chain" id="PRO_0000380648" description="Cysteine-rich venom protein TRI1">
    <location>
        <begin position="19"/>
        <end position="236" status="greater than"/>
    </location>
</feature>
<feature type="domain" description="SCP">
    <location>
        <begin position="37"/>
        <end position="165"/>
    </location>
</feature>
<feature type="domain" description="ShKT" evidence="2">
    <location>
        <begin position="201"/>
        <end position="234"/>
    </location>
</feature>
<feature type="disulfide bond" evidence="2">
    <location>
        <begin position="74"/>
        <end position="152"/>
    </location>
</feature>
<feature type="disulfide bond" evidence="2">
    <location>
        <begin position="91"/>
        <end position="166"/>
    </location>
</feature>
<feature type="disulfide bond" evidence="2">
    <location>
        <begin position="147"/>
        <end position="163"/>
    </location>
</feature>
<feature type="disulfide bond" evidence="2">
    <location>
        <begin position="185"/>
        <end position="192"/>
    </location>
</feature>
<feature type="disulfide bond" evidence="2">
    <location>
        <begin position="188"/>
        <end position="197"/>
    </location>
</feature>
<feature type="disulfide bond" evidence="2">
    <location>
        <begin position="201"/>
        <end position="234"/>
    </location>
</feature>
<feature type="disulfide bond" evidence="2">
    <location>
        <begin position="210"/>
        <end position="228"/>
    </location>
</feature>
<feature type="disulfide bond" evidence="2">
    <location>
        <begin position="219"/>
        <end position="232"/>
    </location>
</feature>
<feature type="non-terminal residue">
    <location>
        <position position="236"/>
    </location>
</feature>
<accession>Q2XXP4</accession>
<dbReference type="EMBL" id="DQ139901">
    <property type="protein sequence ID" value="AAZ75607.1"/>
    <property type="molecule type" value="mRNA"/>
</dbReference>
<dbReference type="SMR" id="Q2XXP4"/>
<dbReference type="GO" id="GO:0005576">
    <property type="term" value="C:extracellular region"/>
    <property type="evidence" value="ECO:0007669"/>
    <property type="project" value="UniProtKB-SubCell"/>
</dbReference>
<dbReference type="GO" id="GO:0005246">
    <property type="term" value="F:calcium channel regulator activity"/>
    <property type="evidence" value="ECO:0007669"/>
    <property type="project" value="UniProtKB-KW"/>
</dbReference>
<dbReference type="GO" id="GO:0090729">
    <property type="term" value="F:toxin activity"/>
    <property type="evidence" value="ECO:0007669"/>
    <property type="project" value="UniProtKB-KW"/>
</dbReference>
<dbReference type="CDD" id="cd05383">
    <property type="entry name" value="CAP_CRISP"/>
    <property type="match status" value="1"/>
</dbReference>
<dbReference type="FunFam" id="1.10.10.740:FF:000001">
    <property type="entry name" value="Cysteine-rich secretory protein 2"/>
    <property type="match status" value="1"/>
</dbReference>
<dbReference type="FunFam" id="3.40.33.10:FF:000005">
    <property type="entry name" value="Cysteine-rich secretory protein 2"/>
    <property type="match status" value="1"/>
</dbReference>
<dbReference type="Gene3D" id="3.40.33.10">
    <property type="entry name" value="CAP"/>
    <property type="match status" value="1"/>
</dbReference>
<dbReference type="Gene3D" id="1.10.10.740">
    <property type="entry name" value="Crisp domain"/>
    <property type="match status" value="1"/>
</dbReference>
<dbReference type="InterPro" id="IPR018244">
    <property type="entry name" value="Allrgn_V5/Tpx1_CS"/>
</dbReference>
<dbReference type="InterPro" id="IPR014044">
    <property type="entry name" value="CAP_dom"/>
</dbReference>
<dbReference type="InterPro" id="IPR035940">
    <property type="entry name" value="CAP_sf"/>
</dbReference>
<dbReference type="InterPro" id="IPR042076">
    <property type="entry name" value="Crisp-like_dom"/>
</dbReference>
<dbReference type="InterPro" id="IPR001283">
    <property type="entry name" value="CRISP-related"/>
</dbReference>
<dbReference type="InterPro" id="IPR013871">
    <property type="entry name" value="Cysteine_rich_secretory"/>
</dbReference>
<dbReference type="InterPro" id="IPR034117">
    <property type="entry name" value="SCP_CRISP"/>
</dbReference>
<dbReference type="InterPro" id="IPR003582">
    <property type="entry name" value="ShKT_dom"/>
</dbReference>
<dbReference type="PANTHER" id="PTHR10334">
    <property type="entry name" value="CYSTEINE-RICH SECRETORY PROTEIN-RELATED"/>
    <property type="match status" value="1"/>
</dbReference>
<dbReference type="Pfam" id="PF00188">
    <property type="entry name" value="CAP"/>
    <property type="match status" value="1"/>
</dbReference>
<dbReference type="Pfam" id="PF08562">
    <property type="entry name" value="Crisp"/>
    <property type="match status" value="1"/>
</dbReference>
<dbReference type="PRINTS" id="PR00837">
    <property type="entry name" value="V5TPXLIKE"/>
</dbReference>
<dbReference type="SMART" id="SM00198">
    <property type="entry name" value="SCP"/>
    <property type="match status" value="1"/>
</dbReference>
<dbReference type="SUPFAM" id="SSF57546">
    <property type="entry name" value="Crisp domain-like"/>
    <property type="match status" value="1"/>
</dbReference>
<dbReference type="SUPFAM" id="SSF55797">
    <property type="entry name" value="PR-1-like"/>
    <property type="match status" value="1"/>
</dbReference>
<dbReference type="PROSITE" id="PS01009">
    <property type="entry name" value="CRISP_1"/>
    <property type="match status" value="1"/>
</dbReference>
<dbReference type="PROSITE" id="PS01010">
    <property type="entry name" value="CRISP_2"/>
    <property type="match status" value="1"/>
</dbReference>
<dbReference type="PROSITE" id="PS51670">
    <property type="entry name" value="SHKT"/>
    <property type="match status" value="1"/>
</dbReference>
<evidence type="ECO:0000250" key="1"/>
<evidence type="ECO:0000255" key="2">
    <source>
        <dbReference type="PROSITE-ProRule" id="PRU01005"/>
    </source>
</evidence>
<evidence type="ECO:0000305" key="3"/>
<protein>
    <recommendedName>
        <fullName>Cysteine-rich venom protein TRI1</fullName>
        <shortName>CRVP</shortName>
    </recommendedName>
    <alternativeName>
        <fullName>Cysteine-rich secretory protein TRI1</fullName>
        <shortName>CRISP-TRI1</shortName>
    </alternativeName>
</protein>